<name>ILVC_METLZ</name>
<reference key="1">
    <citation type="journal article" date="2009" name="Stand. Genomic Sci.">
        <title>Complete genome sequence of Methanocorpusculum labreanum type strain Z.</title>
        <authorList>
            <person name="Anderson I.J."/>
            <person name="Sieprawska-Lupa M."/>
            <person name="Goltsman E."/>
            <person name="Lapidus A."/>
            <person name="Copeland A."/>
            <person name="Glavina Del Rio T."/>
            <person name="Tice H."/>
            <person name="Dalin E."/>
            <person name="Barry K."/>
            <person name="Pitluck S."/>
            <person name="Hauser L."/>
            <person name="Land M."/>
            <person name="Lucas S."/>
            <person name="Richardson P."/>
            <person name="Whitman W.B."/>
            <person name="Kyrpides N.C."/>
        </authorList>
    </citation>
    <scope>NUCLEOTIDE SEQUENCE [LARGE SCALE GENOMIC DNA]</scope>
    <source>
        <strain>ATCC 43576 / DSM 4855 / Z</strain>
    </source>
</reference>
<evidence type="ECO:0000255" key="1">
    <source>
        <dbReference type="HAMAP-Rule" id="MF_00435"/>
    </source>
</evidence>
<evidence type="ECO:0000255" key="2">
    <source>
        <dbReference type="PROSITE-ProRule" id="PRU01197"/>
    </source>
</evidence>
<evidence type="ECO:0000255" key="3">
    <source>
        <dbReference type="PROSITE-ProRule" id="PRU01198"/>
    </source>
</evidence>
<accession>A2SR20</accession>
<organism>
    <name type="scientific">Methanocorpusculum labreanum (strain ATCC 43576 / DSM 4855 / Z)</name>
    <dbReference type="NCBI Taxonomy" id="410358"/>
    <lineage>
        <taxon>Archaea</taxon>
        <taxon>Methanobacteriati</taxon>
        <taxon>Methanobacteriota</taxon>
        <taxon>Stenosarchaea group</taxon>
        <taxon>Methanomicrobia</taxon>
        <taxon>Methanomicrobiales</taxon>
        <taxon>Methanocorpusculaceae</taxon>
        <taxon>Methanocorpusculum</taxon>
    </lineage>
</organism>
<sequence length="330" mass="36396">MMEKYHETDADLKDLSGKTIAVIGYGSQGRGQSRNLKDSGLNVIIGIRAGKSRDLAKSDGFETYDVAEAAKKGDVIMILVPDENQAAVYKAEIMPYLTENKCLMFSHGFNIHFGQIVPPANVDVIMVAPKGPGHMVRRTYEEGKGVPALIAIEQDHTGNAKKLALAYAKGIGATRAVVLETTFREETETDLFGEQAVLCGGVTSLIKAGFDTLVDAGYAPEMAYLEVLHEMKLIVDLIYEGGFTKMREAISNTAQYGDITRGPRVIGNESYEAMREILYEIQSGEFAKEWILENMVNRPTFTALTRADEEHLIEEVGSELRAMMPQFKKN</sequence>
<feature type="chain" id="PRO_1000050529" description="Ketol-acid reductoisomerase (NADP(+))">
    <location>
        <begin position="1"/>
        <end position="330"/>
    </location>
</feature>
<feature type="domain" description="KARI N-terminal Rossmann" evidence="2">
    <location>
        <begin position="2"/>
        <end position="181"/>
    </location>
</feature>
<feature type="domain" description="KARI C-terminal knotted" evidence="3">
    <location>
        <begin position="182"/>
        <end position="327"/>
    </location>
</feature>
<feature type="active site" evidence="1">
    <location>
        <position position="107"/>
    </location>
</feature>
<feature type="binding site" evidence="1">
    <location>
        <begin position="25"/>
        <end position="28"/>
    </location>
    <ligand>
        <name>NADP(+)</name>
        <dbReference type="ChEBI" id="CHEBI:58349"/>
    </ligand>
</feature>
<feature type="binding site" evidence="1">
    <location>
        <position position="48"/>
    </location>
    <ligand>
        <name>NADP(+)</name>
        <dbReference type="ChEBI" id="CHEBI:58349"/>
    </ligand>
</feature>
<feature type="binding site" evidence="1">
    <location>
        <position position="52"/>
    </location>
    <ligand>
        <name>NADP(+)</name>
        <dbReference type="ChEBI" id="CHEBI:58349"/>
    </ligand>
</feature>
<feature type="binding site" evidence="1">
    <location>
        <begin position="82"/>
        <end position="85"/>
    </location>
    <ligand>
        <name>NADP(+)</name>
        <dbReference type="ChEBI" id="CHEBI:58349"/>
    </ligand>
</feature>
<feature type="binding site" evidence="1">
    <location>
        <position position="133"/>
    </location>
    <ligand>
        <name>NADP(+)</name>
        <dbReference type="ChEBI" id="CHEBI:58349"/>
    </ligand>
</feature>
<feature type="binding site" evidence="1">
    <location>
        <position position="190"/>
    </location>
    <ligand>
        <name>Mg(2+)</name>
        <dbReference type="ChEBI" id="CHEBI:18420"/>
        <label>1</label>
    </ligand>
</feature>
<feature type="binding site" evidence="1">
    <location>
        <position position="190"/>
    </location>
    <ligand>
        <name>Mg(2+)</name>
        <dbReference type="ChEBI" id="CHEBI:18420"/>
        <label>2</label>
    </ligand>
</feature>
<feature type="binding site" evidence="1">
    <location>
        <position position="194"/>
    </location>
    <ligand>
        <name>Mg(2+)</name>
        <dbReference type="ChEBI" id="CHEBI:18420"/>
        <label>1</label>
    </ligand>
</feature>
<feature type="binding site" evidence="1">
    <location>
        <position position="226"/>
    </location>
    <ligand>
        <name>Mg(2+)</name>
        <dbReference type="ChEBI" id="CHEBI:18420"/>
        <label>2</label>
    </ligand>
</feature>
<feature type="binding site" evidence="1">
    <location>
        <position position="230"/>
    </location>
    <ligand>
        <name>Mg(2+)</name>
        <dbReference type="ChEBI" id="CHEBI:18420"/>
        <label>2</label>
    </ligand>
</feature>
<feature type="binding site" evidence="1">
    <location>
        <position position="251"/>
    </location>
    <ligand>
        <name>substrate</name>
    </ligand>
</feature>
<keyword id="KW-0028">Amino-acid biosynthesis</keyword>
<keyword id="KW-0100">Branched-chain amino acid biosynthesis</keyword>
<keyword id="KW-0460">Magnesium</keyword>
<keyword id="KW-0479">Metal-binding</keyword>
<keyword id="KW-0521">NADP</keyword>
<keyword id="KW-0560">Oxidoreductase</keyword>
<keyword id="KW-1185">Reference proteome</keyword>
<protein>
    <recommendedName>
        <fullName evidence="1">Ketol-acid reductoisomerase (NADP(+))</fullName>
        <shortName evidence="1">KARI</shortName>
        <ecNumber evidence="1">1.1.1.86</ecNumber>
    </recommendedName>
    <alternativeName>
        <fullName evidence="1">Acetohydroxy-acid isomeroreductase</fullName>
        <shortName evidence="1">AHIR</shortName>
    </alternativeName>
    <alternativeName>
        <fullName evidence="1">Alpha-keto-beta-hydroxylacyl reductoisomerase</fullName>
    </alternativeName>
    <alternativeName>
        <fullName evidence="1">Ketol-acid reductoisomerase type 1</fullName>
    </alternativeName>
    <alternativeName>
        <fullName evidence="1">Ketol-acid reductoisomerase type I</fullName>
    </alternativeName>
</protein>
<proteinExistence type="inferred from homology"/>
<dbReference type="EC" id="1.1.1.86" evidence="1"/>
<dbReference type="EMBL" id="CP000559">
    <property type="protein sequence ID" value="ABN06776.1"/>
    <property type="molecule type" value="Genomic_DNA"/>
</dbReference>
<dbReference type="RefSeq" id="WP_011832977.1">
    <property type="nucleotide sequence ID" value="NC_008942.1"/>
</dbReference>
<dbReference type="SMR" id="A2SR20"/>
<dbReference type="STRING" id="410358.Mlab_0602"/>
<dbReference type="GeneID" id="4795879"/>
<dbReference type="KEGG" id="mla:Mlab_0602"/>
<dbReference type="eggNOG" id="arCOG04465">
    <property type="taxonomic scope" value="Archaea"/>
</dbReference>
<dbReference type="HOGENOM" id="CLU_033821_0_1_2"/>
<dbReference type="UniPathway" id="UPA00047">
    <property type="reaction ID" value="UER00056"/>
</dbReference>
<dbReference type="UniPathway" id="UPA00049">
    <property type="reaction ID" value="UER00060"/>
</dbReference>
<dbReference type="Proteomes" id="UP000000365">
    <property type="component" value="Chromosome"/>
</dbReference>
<dbReference type="GO" id="GO:0005829">
    <property type="term" value="C:cytosol"/>
    <property type="evidence" value="ECO:0007669"/>
    <property type="project" value="TreeGrafter"/>
</dbReference>
<dbReference type="GO" id="GO:0004455">
    <property type="term" value="F:ketol-acid reductoisomerase activity"/>
    <property type="evidence" value="ECO:0007669"/>
    <property type="project" value="UniProtKB-UniRule"/>
</dbReference>
<dbReference type="GO" id="GO:0000287">
    <property type="term" value="F:magnesium ion binding"/>
    <property type="evidence" value="ECO:0007669"/>
    <property type="project" value="UniProtKB-UniRule"/>
</dbReference>
<dbReference type="GO" id="GO:0050661">
    <property type="term" value="F:NADP binding"/>
    <property type="evidence" value="ECO:0007669"/>
    <property type="project" value="InterPro"/>
</dbReference>
<dbReference type="GO" id="GO:0009097">
    <property type="term" value="P:isoleucine biosynthetic process"/>
    <property type="evidence" value="ECO:0007669"/>
    <property type="project" value="UniProtKB-UniRule"/>
</dbReference>
<dbReference type="GO" id="GO:0009099">
    <property type="term" value="P:L-valine biosynthetic process"/>
    <property type="evidence" value="ECO:0007669"/>
    <property type="project" value="UniProtKB-UniRule"/>
</dbReference>
<dbReference type="FunFam" id="3.40.50.720:FF:000023">
    <property type="entry name" value="Ketol-acid reductoisomerase (NADP(+))"/>
    <property type="match status" value="1"/>
</dbReference>
<dbReference type="Gene3D" id="6.10.240.10">
    <property type="match status" value="1"/>
</dbReference>
<dbReference type="Gene3D" id="3.40.50.720">
    <property type="entry name" value="NAD(P)-binding Rossmann-like Domain"/>
    <property type="match status" value="1"/>
</dbReference>
<dbReference type="HAMAP" id="MF_00435">
    <property type="entry name" value="IlvC"/>
    <property type="match status" value="1"/>
</dbReference>
<dbReference type="InterPro" id="IPR008927">
    <property type="entry name" value="6-PGluconate_DH-like_C_sf"/>
</dbReference>
<dbReference type="InterPro" id="IPR013023">
    <property type="entry name" value="KARI"/>
</dbReference>
<dbReference type="InterPro" id="IPR000506">
    <property type="entry name" value="KARI_C"/>
</dbReference>
<dbReference type="InterPro" id="IPR013116">
    <property type="entry name" value="KARI_N"/>
</dbReference>
<dbReference type="InterPro" id="IPR014359">
    <property type="entry name" value="KARI_prok"/>
</dbReference>
<dbReference type="InterPro" id="IPR036291">
    <property type="entry name" value="NAD(P)-bd_dom_sf"/>
</dbReference>
<dbReference type="NCBIfam" id="TIGR00465">
    <property type="entry name" value="ilvC"/>
    <property type="match status" value="1"/>
</dbReference>
<dbReference type="NCBIfam" id="NF004017">
    <property type="entry name" value="PRK05479.1"/>
    <property type="match status" value="1"/>
</dbReference>
<dbReference type="NCBIfam" id="NF009940">
    <property type="entry name" value="PRK13403.1"/>
    <property type="match status" value="1"/>
</dbReference>
<dbReference type="PANTHER" id="PTHR21371">
    <property type="entry name" value="KETOL-ACID REDUCTOISOMERASE, MITOCHONDRIAL"/>
    <property type="match status" value="1"/>
</dbReference>
<dbReference type="PANTHER" id="PTHR21371:SF1">
    <property type="entry name" value="KETOL-ACID REDUCTOISOMERASE, MITOCHONDRIAL"/>
    <property type="match status" value="1"/>
</dbReference>
<dbReference type="Pfam" id="PF01450">
    <property type="entry name" value="KARI_C"/>
    <property type="match status" value="1"/>
</dbReference>
<dbReference type="Pfam" id="PF07991">
    <property type="entry name" value="KARI_N"/>
    <property type="match status" value="1"/>
</dbReference>
<dbReference type="PIRSF" id="PIRSF000116">
    <property type="entry name" value="IlvC_gammaproteo"/>
    <property type="match status" value="1"/>
</dbReference>
<dbReference type="SUPFAM" id="SSF48179">
    <property type="entry name" value="6-phosphogluconate dehydrogenase C-terminal domain-like"/>
    <property type="match status" value="1"/>
</dbReference>
<dbReference type="SUPFAM" id="SSF51735">
    <property type="entry name" value="NAD(P)-binding Rossmann-fold domains"/>
    <property type="match status" value="1"/>
</dbReference>
<dbReference type="PROSITE" id="PS51851">
    <property type="entry name" value="KARI_C"/>
    <property type="match status" value="1"/>
</dbReference>
<dbReference type="PROSITE" id="PS51850">
    <property type="entry name" value="KARI_N"/>
    <property type="match status" value="1"/>
</dbReference>
<comment type="function">
    <text evidence="1">Involved in the biosynthesis of branched-chain amino acids (BCAA). Catalyzes an alkyl-migration followed by a ketol-acid reduction of (S)-2-acetolactate (S2AL) to yield (R)-2,3-dihydroxy-isovalerate. In the isomerase reaction, S2AL is rearranged via a Mg-dependent methyl migration to produce 3-hydroxy-3-methyl-2-ketobutyrate (HMKB). In the reductase reaction, this 2-ketoacid undergoes a metal-dependent reduction by NADPH to yield (R)-2,3-dihydroxy-isovalerate.</text>
</comment>
<comment type="catalytic activity">
    <reaction evidence="1">
        <text>(2R)-2,3-dihydroxy-3-methylbutanoate + NADP(+) = (2S)-2-acetolactate + NADPH + H(+)</text>
        <dbReference type="Rhea" id="RHEA:22068"/>
        <dbReference type="ChEBI" id="CHEBI:15378"/>
        <dbReference type="ChEBI" id="CHEBI:49072"/>
        <dbReference type="ChEBI" id="CHEBI:57783"/>
        <dbReference type="ChEBI" id="CHEBI:58349"/>
        <dbReference type="ChEBI" id="CHEBI:58476"/>
        <dbReference type="EC" id="1.1.1.86"/>
    </reaction>
</comment>
<comment type="catalytic activity">
    <reaction evidence="1">
        <text>(2R,3R)-2,3-dihydroxy-3-methylpentanoate + NADP(+) = (S)-2-ethyl-2-hydroxy-3-oxobutanoate + NADPH + H(+)</text>
        <dbReference type="Rhea" id="RHEA:13493"/>
        <dbReference type="ChEBI" id="CHEBI:15378"/>
        <dbReference type="ChEBI" id="CHEBI:49256"/>
        <dbReference type="ChEBI" id="CHEBI:49258"/>
        <dbReference type="ChEBI" id="CHEBI:57783"/>
        <dbReference type="ChEBI" id="CHEBI:58349"/>
        <dbReference type="EC" id="1.1.1.86"/>
    </reaction>
</comment>
<comment type="cofactor">
    <cofactor evidence="1">
        <name>Mg(2+)</name>
        <dbReference type="ChEBI" id="CHEBI:18420"/>
    </cofactor>
    <text evidence="1">Binds 2 magnesium ions per subunit.</text>
</comment>
<comment type="pathway">
    <text evidence="1">Amino-acid biosynthesis; L-isoleucine biosynthesis; L-isoleucine from 2-oxobutanoate: step 2/4.</text>
</comment>
<comment type="pathway">
    <text evidence="1">Amino-acid biosynthesis; L-valine biosynthesis; L-valine from pyruvate: step 2/4.</text>
</comment>
<comment type="similarity">
    <text evidence="1">Belongs to the ketol-acid reductoisomerase family.</text>
</comment>
<gene>
    <name evidence="1" type="primary">ilvC</name>
    <name type="ordered locus">Mlab_0602</name>
</gene>